<proteinExistence type="inferred from homology"/>
<accession>Q3SLQ3</accession>
<protein>
    <recommendedName>
        <fullName evidence="1">Small ribosomal subunit protein uS7</fullName>
    </recommendedName>
    <alternativeName>
        <fullName evidence="2">30S ribosomal protein S7</fullName>
    </alternativeName>
</protein>
<keyword id="KW-1185">Reference proteome</keyword>
<keyword id="KW-0687">Ribonucleoprotein</keyword>
<keyword id="KW-0689">Ribosomal protein</keyword>
<keyword id="KW-0694">RNA-binding</keyword>
<keyword id="KW-0699">rRNA-binding</keyword>
<keyword id="KW-0820">tRNA-binding</keyword>
<name>RS7_THIDA</name>
<feature type="chain" id="PRO_0000226537" description="Small ribosomal subunit protein uS7">
    <location>
        <begin position="1"/>
        <end position="156"/>
    </location>
</feature>
<comment type="function">
    <text evidence="1">One of the primary rRNA binding proteins, it binds directly to 16S rRNA where it nucleates assembly of the head domain of the 30S subunit. Is located at the subunit interface close to the decoding center, probably blocks exit of the E-site tRNA.</text>
</comment>
<comment type="subunit">
    <text evidence="1">Part of the 30S ribosomal subunit. Contacts proteins S9 and S11.</text>
</comment>
<comment type="similarity">
    <text evidence="1">Belongs to the universal ribosomal protein uS7 family.</text>
</comment>
<organism>
    <name type="scientific">Thiobacillus denitrificans (strain ATCC 25259 / T1)</name>
    <dbReference type="NCBI Taxonomy" id="292415"/>
    <lineage>
        <taxon>Bacteria</taxon>
        <taxon>Pseudomonadati</taxon>
        <taxon>Pseudomonadota</taxon>
        <taxon>Betaproteobacteria</taxon>
        <taxon>Nitrosomonadales</taxon>
        <taxon>Thiobacillaceae</taxon>
        <taxon>Thiobacillus</taxon>
    </lineage>
</organism>
<sequence length="156" mass="17501">MPRRREVPKREILPDPKFGNQEVSKFMNVVMSSGKKSVAERIVYGAFEQITTKSGKDPLEVFSTALNNARPLVEVKSRRVGGANYQVPVEVRSSRRTALAMRWLKDAARKRGEKSMGARLAGELLDAAEGRGGAVKKREEVHRMAEANKAFSHFRF</sequence>
<evidence type="ECO:0000255" key="1">
    <source>
        <dbReference type="HAMAP-Rule" id="MF_00480"/>
    </source>
</evidence>
<evidence type="ECO:0000305" key="2"/>
<gene>
    <name evidence="1" type="primary">rpsG</name>
    <name type="ordered locus">Tbd_0401</name>
</gene>
<dbReference type="EMBL" id="CP000116">
    <property type="protein sequence ID" value="AAZ96354.1"/>
    <property type="molecule type" value="Genomic_DNA"/>
</dbReference>
<dbReference type="RefSeq" id="WP_011310914.1">
    <property type="nucleotide sequence ID" value="NC_007404.1"/>
</dbReference>
<dbReference type="SMR" id="Q3SLQ3"/>
<dbReference type="STRING" id="292415.Tbd_0401"/>
<dbReference type="KEGG" id="tbd:Tbd_0401"/>
<dbReference type="eggNOG" id="COG0049">
    <property type="taxonomic scope" value="Bacteria"/>
</dbReference>
<dbReference type="HOGENOM" id="CLU_072226_1_1_4"/>
<dbReference type="OrthoDB" id="9807653at2"/>
<dbReference type="Proteomes" id="UP000008291">
    <property type="component" value="Chromosome"/>
</dbReference>
<dbReference type="GO" id="GO:0015935">
    <property type="term" value="C:small ribosomal subunit"/>
    <property type="evidence" value="ECO:0007669"/>
    <property type="project" value="InterPro"/>
</dbReference>
<dbReference type="GO" id="GO:0019843">
    <property type="term" value="F:rRNA binding"/>
    <property type="evidence" value="ECO:0007669"/>
    <property type="project" value="UniProtKB-UniRule"/>
</dbReference>
<dbReference type="GO" id="GO:0003735">
    <property type="term" value="F:structural constituent of ribosome"/>
    <property type="evidence" value="ECO:0007669"/>
    <property type="project" value="InterPro"/>
</dbReference>
<dbReference type="GO" id="GO:0000049">
    <property type="term" value="F:tRNA binding"/>
    <property type="evidence" value="ECO:0007669"/>
    <property type="project" value="UniProtKB-UniRule"/>
</dbReference>
<dbReference type="GO" id="GO:0006412">
    <property type="term" value="P:translation"/>
    <property type="evidence" value="ECO:0007669"/>
    <property type="project" value="UniProtKB-UniRule"/>
</dbReference>
<dbReference type="CDD" id="cd14869">
    <property type="entry name" value="uS7_Bacteria"/>
    <property type="match status" value="1"/>
</dbReference>
<dbReference type="FunFam" id="1.10.455.10:FF:000001">
    <property type="entry name" value="30S ribosomal protein S7"/>
    <property type="match status" value="1"/>
</dbReference>
<dbReference type="Gene3D" id="1.10.455.10">
    <property type="entry name" value="Ribosomal protein S7 domain"/>
    <property type="match status" value="1"/>
</dbReference>
<dbReference type="HAMAP" id="MF_00480_B">
    <property type="entry name" value="Ribosomal_uS7_B"/>
    <property type="match status" value="1"/>
</dbReference>
<dbReference type="InterPro" id="IPR000235">
    <property type="entry name" value="Ribosomal_uS7"/>
</dbReference>
<dbReference type="InterPro" id="IPR005717">
    <property type="entry name" value="Ribosomal_uS7_bac/org-type"/>
</dbReference>
<dbReference type="InterPro" id="IPR020606">
    <property type="entry name" value="Ribosomal_uS7_CS"/>
</dbReference>
<dbReference type="InterPro" id="IPR023798">
    <property type="entry name" value="Ribosomal_uS7_dom"/>
</dbReference>
<dbReference type="InterPro" id="IPR036823">
    <property type="entry name" value="Ribosomal_uS7_dom_sf"/>
</dbReference>
<dbReference type="NCBIfam" id="TIGR01029">
    <property type="entry name" value="rpsG_bact"/>
    <property type="match status" value="1"/>
</dbReference>
<dbReference type="PANTHER" id="PTHR11205">
    <property type="entry name" value="RIBOSOMAL PROTEIN S7"/>
    <property type="match status" value="1"/>
</dbReference>
<dbReference type="Pfam" id="PF00177">
    <property type="entry name" value="Ribosomal_S7"/>
    <property type="match status" value="1"/>
</dbReference>
<dbReference type="PIRSF" id="PIRSF002122">
    <property type="entry name" value="RPS7p_RPS7a_RPS5e_RPS7o"/>
    <property type="match status" value="1"/>
</dbReference>
<dbReference type="SUPFAM" id="SSF47973">
    <property type="entry name" value="Ribosomal protein S7"/>
    <property type="match status" value="1"/>
</dbReference>
<dbReference type="PROSITE" id="PS00052">
    <property type="entry name" value="RIBOSOMAL_S7"/>
    <property type="match status" value="1"/>
</dbReference>
<reference key="1">
    <citation type="journal article" date="2006" name="J. Bacteriol.">
        <title>The genome sequence of the obligately chemolithoautotrophic, facultatively anaerobic bacterium Thiobacillus denitrificans.</title>
        <authorList>
            <person name="Beller H.R."/>
            <person name="Chain P.S."/>
            <person name="Letain T.E."/>
            <person name="Chakicherla A."/>
            <person name="Larimer F.W."/>
            <person name="Richardson P.M."/>
            <person name="Coleman M.A."/>
            <person name="Wood A.P."/>
            <person name="Kelly D.P."/>
        </authorList>
    </citation>
    <scope>NUCLEOTIDE SEQUENCE [LARGE SCALE GENOMIC DNA]</scope>
    <source>
        <strain>ATCC 25259 / T1</strain>
    </source>
</reference>